<keyword id="KW-0963">Cytoplasm</keyword>
<keyword id="KW-0460">Magnesium</keyword>
<keyword id="KW-0479">Metal-binding</keyword>
<keyword id="KW-0548">Nucleotidyltransferase</keyword>
<keyword id="KW-1185">Reference proteome</keyword>
<keyword id="KW-0694">RNA-binding</keyword>
<keyword id="KW-0808">Transferase</keyword>
<protein>
    <recommendedName>
        <fullName evidence="1">Polyribonucleotide nucleotidyltransferase</fullName>
        <ecNumber evidence="1">2.7.7.8</ecNumber>
    </recommendedName>
    <alternativeName>
        <fullName evidence="1">Polynucleotide phosphorylase</fullName>
        <shortName evidence="1">PNPase</shortName>
    </alternativeName>
</protein>
<feature type="chain" id="PRO_0000329929" description="Polyribonucleotide nucleotidyltransferase">
    <location>
        <begin position="1"/>
        <end position="709"/>
    </location>
</feature>
<feature type="domain" description="KH" evidence="1">
    <location>
        <begin position="554"/>
        <end position="613"/>
    </location>
</feature>
<feature type="domain" description="S1 motif" evidence="1">
    <location>
        <begin position="623"/>
        <end position="691"/>
    </location>
</feature>
<feature type="binding site" evidence="1">
    <location>
        <position position="487"/>
    </location>
    <ligand>
        <name>Mg(2+)</name>
        <dbReference type="ChEBI" id="CHEBI:18420"/>
    </ligand>
</feature>
<feature type="binding site" evidence="1">
    <location>
        <position position="493"/>
    </location>
    <ligand>
        <name>Mg(2+)</name>
        <dbReference type="ChEBI" id="CHEBI:18420"/>
    </ligand>
</feature>
<dbReference type="EC" id="2.7.7.8" evidence="1"/>
<dbReference type="EMBL" id="CP000020">
    <property type="protein sequence ID" value="AAW84985.1"/>
    <property type="molecule type" value="Genomic_DNA"/>
</dbReference>
<dbReference type="RefSeq" id="WP_011261261.1">
    <property type="nucleotide sequence ID" value="NC_006840.2"/>
</dbReference>
<dbReference type="RefSeq" id="YP_203873.1">
    <property type="nucleotide sequence ID" value="NC_006840.2"/>
</dbReference>
<dbReference type="SMR" id="Q5E7L1"/>
<dbReference type="STRING" id="312309.VF_0490"/>
<dbReference type="EnsemblBacteria" id="AAW84985">
    <property type="protein sequence ID" value="AAW84985"/>
    <property type="gene ID" value="VF_0490"/>
</dbReference>
<dbReference type="GeneID" id="54163127"/>
<dbReference type="KEGG" id="vfi:VF_0490"/>
<dbReference type="PATRIC" id="fig|312309.11.peg.480"/>
<dbReference type="eggNOG" id="COG1185">
    <property type="taxonomic scope" value="Bacteria"/>
</dbReference>
<dbReference type="HOGENOM" id="CLU_004217_2_2_6"/>
<dbReference type="OrthoDB" id="9804305at2"/>
<dbReference type="Proteomes" id="UP000000537">
    <property type="component" value="Chromosome I"/>
</dbReference>
<dbReference type="GO" id="GO:0005829">
    <property type="term" value="C:cytosol"/>
    <property type="evidence" value="ECO:0007669"/>
    <property type="project" value="TreeGrafter"/>
</dbReference>
<dbReference type="GO" id="GO:0000175">
    <property type="term" value="F:3'-5'-RNA exonuclease activity"/>
    <property type="evidence" value="ECO:0007669"/>
    <property type="project" value="TreeGrafter"/>
</dbReference>
<dbReference type="GO" id="GO:0000287">
    <property type="term" value="F:magnesium ion binding"/>
    <property type="evidence" value="ECO:0007669"/>
    <property type="project" value="UniProtKB-UniRule"/>
</dbReference>
<dbReference type="GO" id="GO:0004654">
    <property type="term" value="F:polyribonucleotide nucleotidyltransferase activity"/>
    <property type="evidence" value="ECO:0007669"/>
    <property type="project" value="UniProtKB-UniRule"/>
</dbReference>
<dbReference type="GO" id="GO:0003723">
    <property type="term" value="F:RNA binding"/>
    <property type="evidence" value="ECO:0007669"/>
    <property type="project" value="UniProtKB-UniRule"/>
</dbReference>
<dbReference type="GO" id="GO:0006402">
    <property type="term" value="P:mRNA catabolic process"/>
    <property type="evidence" value="ECO:0007669"/>
    <property type="project" value="UniProtKB-UniRule"/>
</dbReference>
<dbReference type="GO" id="GO:0006396">
    <property type="term" value="P:RNA processing"/>
    <property type="evidence" value="ECO:0007669"/>
    <property type="project" value="InterPro"/>
</dbReference>
<dbReference type="CDD" id="cd02393">
    <property type="entry name" value="KH-I_PNPase"/>
    <property type="match status" value="1"/>
</dbReference>
<dbReference type="CDD" id="cd11363">
    <property type="entry name" value="RNase_PH_PNPase_1"/>
    <property type="match status" value="1"/>
</dbReference>
<dbReference type="CDD" id="cd11364">
    <property type="entry name" value="RNase_PH_PNPase_2"/>
    <property type="match status" value="1"/>
</dbReference>
<dbReference type="CDD" id="cd04472">
    <property type="entry name" value="S1_PNPase"/>
    <property type="match status" value="1"/>
</dbReference>
<dbReference type="FunFam" id="2.40.50.140:FF:000023">
    <property type="entry name" value="Polyribonucleotide nucleotidyltransferase"/>
    <property type="match status" value="1"/>
</dbReference>
<dbReference type="FunFam" id="3.30.1370.10:FF:000001">
    <property type="entry name" value="Polyribonucleotide nucleotidyltransferase"/>
    <property type="match status" value="1"/>
</dbReference>
<dbReference type="FunFam" id="3.30.230.70:FF:000001">
    <property type="entry name" value="Polyribonucleotide nucleotidyltransferase"/>
    <property type="match status" value="1"/>
</dbReference>
<dbReference type="FunFam" id="3.30.230.70:FF:000002">
    <property type="entry name" value="Polyribonucleotide nucleotidyltransferase"/>
    <property type="match status" value="1"/>
</dbReference>
<dbReference type="Gene3D" id="3.30.230.70">
    <property type="entry name" value="GHMP Kinase, N-terminal domain"/>
    <property type="match status" value="2"/>
</dbReference>
<dbReference type="Gene3D" id="3.30.1370.10">
    <property type="entry name" value="K Homology domain, type 1"/>
    <property type="match status" value="1"/>
</dbReference>
<dbReference type="Gene3D" id="2.40.50.140">
    <property type="entry name" value="Nucleic acid-binding proteins"/>
    <property type="match status" value="1"/>
</dbReference>
<dbReference type="HAMAP" id="MF_01595">
    <property type="entry name" value="PNPase"/>
    <property type="match status" value="1"/>
</dbReference>
<dbReference type="InterPro" id="IPR001247">
    <property type="entry name" value="ExoRNase_PH_dom1"/>
</dbReference>
<dbReference type="InterPro" id="IPR015847">
    <property type="entry name" value="ExoRNase_PH_dom2"/>
</dbReference>
<dbReference type="InterPro" id="IPR036345">
    <property type="entry name" value="ExoRNase_PH_dom2_sf"/>
</dbReference>
<dbReference type="InterPro" id="IPR004087">
    <property type="entry name" value="KH_dom"/>
</dbReference>
<dbReference type="InterPro" id="IPR004088">
    <property type="entry name" value="KH_dom_type_1"/>
</dbReference>
<dbReference type="InterPro" id="IPR036612">
    <property type="entry name" value="KH_dom_type_1_sf"/>
</dbReference>
<dbReference type="InterPro" id="IPR012340">
    <property type="entry name" value="NA-bd_OB-fold"/>
</dbReference>
<dbReference type="InterPro" id="IPR012162">
    <property type="entry name" value="PNPase"/>
</dbReference>
<dbReference type="InterPro" id="IPR027408">
    <property type="entry name" value="PNPase/RNase_PH_dom_sf"/>
</dbReference>
<dbReference type="InterPro" id="IPR015848">
    <property type="entry name" value="PNPase_PH_RNA-bd_bac/org-type"/>
</dbReference>
<dbReference type="InterPro" id="IPR020568">
    <property type="entry name" value="Ribosomal_Su5_D2-typ_SF"/>
</dbReference>
<dbReference type="InterPro" id="IPR003029">
    <property type="entry name" value="S1_domain"/>
</dbReference>
<dbReference type="NCBIfam" id="TIGR03591">
    <property type="entry name" value="polynuc_phos"/>
    <property type="match status" value="1"/>
</dbReference>
<dbReference type="NCBIfam" id="NF008805">
    <property type="entry name" value="PRK11824.1"/>
    <property type="match status" value="1"/>
</dbReference>
<dbReference type="PANTHER" id="PTHR11252">
    <property type="entry name" value="POLYRIBONUCLEOTIDE NUCLEOTIDYLTRANSFERASE"/>
    <property type="match status" value="1"/>
</dbReference>
<dbReference type="PANTHER" id="PTHR11252:SF0">
    <property type="entry name" value="POLYRIBONUCLEOTIDE NUCLEOTIDYLTRANSFERASE 1, MITOCHONDRIAL"/>
    <property type="match status" value="1"/>
</dbReference>
<dbReference type="Pfam" id="PF00013">
    <property type="entry name" value="KH_1"/>
    <property type="match status" value="1"/>
</dbReference>
<dbReference type="Pfam" id="PF03726">
    <property type="entry name" value="PNPase"/>
    <property type="match status" value="1"/>
</dbReference>
<dbReference type="Pfam" id="PF01138">
    <property type="entry name" value="RNase_PH"/>
    <property type="match status" value="2"/>
</dbReference>
<dbReference type="Pfam" id="PF03725">
    <property type="entry name" value="RNase_PH_C"/>
    <property type="match status" value="2"/>
</dbReference>
<dbReference type="Pfam" id="PF00575">
    <property type="entry name" value="S1"/>
    <property type="match status" value="1"/>
</dbReference>
<dbReference type="PIRSF" id="PIRSF005499">
    <property type="entry name" value="PNPase"/>
    <property type="match status" value="1"/>
</dbReference>
<dbReference type="SMART" id="SM00322">
    <property type="entry name" value="KH"/>
    <property type="match status" value="1"/>
</dbReference>
<dbReference type="SMART" id="SM00316">
    <property type="entry name" value="S1"/>
    <property type="match status" value="1"/>
</dbReference>
<dbReference type="SUPFAM" id="SSF54791">
    <property type="entry name" value="Eukaryotic type KH-domain (KH-domain type I)"/>
    <property type="match status" value="1"/>
</dbReference>
<dbReference type="SUPFAM" id="SSF50249">
    <property type="entry name" value="Nucleic acid-binding proteins"/>
    <property type="match status" value="1"/>
</dbReference>
<dbReference type="SUPFAM" id="SSF55666">
    <property type="entry name" value="Ribonuclease PH domain 2-like"/>
    <property type="match status" value="2"/>
</dbReference>
<dbReference type="SUPFAM" id="SSF54211">
    <property type="entry name" value="Ribosomal protein S5 domain 2-like"/>
    <property type="match status" value="2"/>
</dbReference>
<dbReference type="PROSITE" id="PS50084">
    <property type="entry name" value="KH_TYPE_1"/>
    <property type="match status" value="1"/>
</dbReference>
<dbReference type="PROSITE" id="PS50126">
    <property type="entry name" value="S1"/>
    <property type="match status" value="1"/>
</dbReference>
<reference key="1">
    <citation type="journal article" date="2005" name="Proc. Natl. Acad. Sci. U.S.A.">
        <title>Complete genome sequence of Vibrio fischeri: a symbiotic bacterium with pathogenic congeners.</title>
        <authorList>
            <person name="Ruby E.G."/>
            <person name="Urbanowski M."/>
            <person name="Campbell J."/>
            <person name="Dunn A."/>
            <person name="Faini M."/>
            <person name="Gunsalus R."/>
            <person name="Lostroh P."/>
            <person name="Lupp C."/>
            <person name="McCann J."/>
            <person name="Millikan D."/>
            <person name="Schaefer A."/>
            <person name="Stabb E."/>
            <person name="Stevens A."/>
            <person name="Visick K."/>
            <person name="Whistler C."/>
            <person name="Greenberg E.P."/>
        </authorList>
    </citation>
    <scope>NUCLEOTIDE SEQUENCE [LARGE SCALE GENOMIC DNA]</scope>
    <source>
        <strain>ATCC 700601 / ES114</strain>
    </source>
</reference>
<sequence length="709" mass="76835">MFANPVVKSFQYGNHTVTLETGVIARQATAAVMASMDDTSVFVSVVAKKEAVPGQDFFPLTVNYQERTYAAGKIPGGFFKREGRPSEAETLTARLIDRPIRPLFPDAFKNEVQVIATVVSINPEVNPDMITMIGTSAALAIAGIPFNGPIGAARVGHINGELVLNPSNTELENSKLDLVVSGTEGAVLMVESEADNLTEEEMLSAVVFGHEQQQVVINAINEFAAEVATPAWDWVAPEENTVLNARIAELAEAKLVEAYQITEKMTRYDRIHEIAAEVNEVLVSENEDVNLKEVHTIFHDLEKTVVRRSIIAGNPRIDGREKDMVRALDVRTGVLPRTHGSSLFTRGETQALVTATLGTQRDAQIIDSLMGEKKDHFLLHYNFPPYCVGETGFVGSPKRREIGHGKLAKRGIQAVMPSIEEFPYTVRVVSEITESNGSSSMASVCGTSLALMDAGVPIKASVAGIAMGLVKEGDDFVVLSDILGDEDHLGDMDFKVAGTNEGITALQMDIKIEGITKEIMQIALNQAQGARKHILKVMDEAISGAREEISEFAPRIHTMKISSDKIKDVIGKGGAVIRALCEETGTTIEIEDDGTIKIAATEGAAAKEAIRRIEEITAEVEVGKIYTGKVMRIVDFGAFVTVLGPKEGLVHISQIAEERIEKVADHLQVGQEVKTKVLEIDRQGRIRLSIKEANAELNPAPAAEAKDAE</sequence>
<evidence type="ECO:0000255" key="1">
    <source>
        <dbReference type="HAMAP-Rule" id="MF_01595"/>
    </source>
</evidence>
<proteinExistence type="inferred from homology"/>
<comment type="function">
    <text evidence="1">Involved in mRNA degradation. Catalyzes the phosphorolysis of single-stranded polyribonucleotides processively in the 3'- to 5'-direction.</text>
</comment>
<comment type="catalytic activity">
    <reaction evidence="1">
        <text>RNA(n+1) + phosphate = RNA(n) + a ribonucleoside 5'-diphosphate</text>
        <dbReference type="Rhea" id="RHEA:22096"/>
        <dbReference type="Rhea" id="RHEA-COMP:14527"/>
        <dbReference type="Rhea" id="RHEA-COMP:17342"/>
        <dbReference type="ChEBI" id="CHEBI:43474"/>
        <dbReference type="ChEBI" id="CHEBI:57930"/>
        <dbReference type="ChEBI" id="CHEBI:140395"/>
        <dbReference type="EC" id="2.7.7.8"/>
    </reaction>
</comment>
<comment type="cofactor">
    <cofactor evidence="1">
        <name>Mg(2+)</name>
        <dbReference type="ChEBI" id="CHEBI:18420"/>
    </cofactor>
</comment>
<comment type="subunit">
    <text evidence="1">Component of the RNA degradosome, which is a multiprotein complex involved in RNA processing and mRNA degradation.</text>
</comment>
<comment type="subcellular location">
    <subcellularLocation>
        <location evidence="1">Cytoplasm</location>
    </subcellularLocation>
</comment>
<comment type="similarity">
    <text evidence="1">Belongs to the polyribonucleotide nucleotidyltransferase family.</text>
</comment>
<accession>Q5E7L1</accession>
<name>PNP_ALIF1</name>
<gene>
    <name evidence="1" type="primary">pnp</name>
    <name type="ordered locus">VF_0490</name>
</gene>
<organism>
    <name type="scientific">Aliivibrio fischeri (strain ATCC 700601 / ES114)</name>
    <name type="common">Vibrio fischeri</name>
    <dbReference type="NCBI Taxonomy" id="312309"/>
    <lineage>
        <taxon>Bacteria</taxon>
        <taxon>Pseudomonadati</taxon>
        <taxon>Pseudomonadota</taxon>
        <taxon>Gammaproteobacteria</taxon>
        <taxon>Vibrionales</taxon>
        <taxon>Vibrionaceae</taxon>
        <taxon>Aliivibrio</taxon>
    </lineage>
</organism>